<comment type="function">
    <text evidence="1">Specifically methylates position 2 of adenine 2503 in 23S rRNA and position 2 of adenine 37 in tRNAs. m2A2503 modification seems to play a crucial role in the proofreading step occurring at the peptidyl transferase center and thus would serve to optimize ribosomal fidelity.</text>
</comment>
<comment type="catalytic activity">
    <reaction evidence="1">
        <text>adenosine(2503) in 23S rRNA + 2 reduced [2Fe-2S]-[ferredoxin] + 2 S-adenosyl-L-methionine = 2-methyladenosine(2503) in 23S rRNA + 5'-deoxyadenosine + L-methionine + 2 oxidized [2Fe-2S]-[ferredoxin] + S-adenosyl-L-homocysteine</text>
        <dbReference type="Rhea" id="RHEA:42916"/>
        <dbReference type="Rhea" id="RHEA-COMP:10000"/>
        <dbReference type="Rhea" id="RHEA-COMP:10001"/>
        <dbReference type="Rhea" id="RHEA-COMP:10152"/>
        <dbReference type="Rhea" id="RHEA-COMP:10282"/>
        <dbReference type="ChEBI" id="CHEBI:17319"/>
        <dbReference type="ChEBI" id="CHEBI:33737"/>
        <dbReference type="ChEBI" id="CHEBI:33738"/>
        <dbReference type="ChEBI" id="CHEBI:57844"/>
        <dbReference type="ChEBI" id="CHEBI:57856"/>
        <dbReference type="ChEBI" id="CHEBI:59789"/>
        <dbReference type="ChEBI" id="CHEBI:74411"/>
        <dbReference type="ChEBI" id="CHEBI:74497"/>
        <dbReference type="EC" id="2.1.1.192"/>
    </reaction>
</comment>
<comment type="catalytic activity">
    <reaction evidence="1">
        <text>adenosine(37) in tRNA + 2 reduced [2Fe-2S]-[ferredoxin] + 2 S-adenosyl-L-methionine = 2-methyladenosine(37) in tRNA + 5'-deoxyadenosine + L-methionine + 2 oxidized [2Fe-2S]-[ferredoxin] + S-adenosyl-L-homocysteine</text>
        <dbReference type="Rhea" id="RHEA:43332"/>
        <dbReference type="Rhea" id="RHEA-COMP:10000"/>
        <dbReference type="Rhea" id="RHEA-COMP:10001"/>
        <dbReference type="Rhea" id="RHEA-COMP:10162"/>
        <dbReference type="Rhea" id="RHEA-COMP:10485"/>
        <dbReference type="ChEBI" id="CHEBI:17319"/>
        <dbReference type="ChEBI" id="CHEBI:33737"/>
        <dbReference type="ChEBI" id="CHEBI:33738"/>
        <dbReference type="ChEBI" id="CHEBI:57844"/>
        <dbReference type="ChEBI" id="CHEBI:57856"/>
        <dbReference type="ChEBI" id="CHEBI:59789"/>
        <dbReference type="ChEBI" id="CHEBI:74411"/>
        <dbReference type="ChEBI" id="CHEBI:74497"/>
        <dbReference type="EC" id="2.1.1.192"/>
    </reaction>
</comment>
<comment type="cofactor">
    <cofactor evidence="1">
        <name>[4Fe-4S] cluster</name>
        <dbReference type="ChEBI" id="CHEBI:49883"/>
    </cofactor>
    <text evidence="1">Binds 1 [4Fe-4S] cluster. The cluster is coordinated with 3 cysteines and an exchangeable S-adenosyl-L-methionine.</text>
</comment>
<comment type="subcellular location">
    <subcellularLocation>
        <location evidence="1">Cytoplasm</location>
    </subcellularLocation>
</comment>
<comment type="miscellaneous">
    <text evidence="1">Reaction proceeds by a ping-pong mechanism involving intermediate methylation of a conserved cysteine residue.</text>
</comment>
<comment type="similarity">
    <text evidence="1">Belongs to the radical SAM superfamily. RlmN family.</text>
</comment>
<accession>A9MHL3</accession>
<feature type="chain" id="PRO_0000350385" description="Dual-specificity RNA methyltransferase RlmN">
    <location>
        <begin position="1"/>
        <end position="388"/>
    </location>
</feature>
<feature type="domain" description="Radical SAM core" evidence="2">
    <location>
        <begin position="115"/>
        <end position="354"/>
    </location>
</feature>
<feature type="active site" description="Proton acceptor" evidence="1">
    <location>
        <position position="109"/>
    </location>
</feature>
<feature type="active site" description="S-methylcysteine intermediate" evidence="1">
    <location>
        <position position="359"/>
    </location>
</feature>
<feature type="binding site" evidence="1">
    <location>
        <position position="129"/>
    </location>
    <ligand>
        <name>[4Fe-4S] cluster</name>
        <dbReference type="ChEBI" id="CHEBI:49883"/>
        <note>4Fe-4S-S-AdoMet</note>
    </ligand>
</feature>
<feature type="binding site" evidence="1">
    <location>
        <position position="133"/>
    </location>
    <ligand>
        <name>[4Fe-4S] cluster</name>
        <dbReference type="ChEBI" id="CHEBI:49883"/>
        <note>4Fe-4S-S-AdoMet</note>
    </ligand>
</feature>
<feature type="binding site" evidence="1">
    <location>
        <position position="136"/>
    </location>
    <ligand>
        <name>[4Fe-4S] cluster</name>
        <dbReference type="ChEBI" id="CHEBI:49883"/>
        <note>4Fe-4S-S-AdoMet</note>
    </ligand>
</feature>
<feature type="binding site" evidence="1">
    <location>
        <begin position="183"/>
        <end position="184"/>
    </location>
    <ligand>
        <name>S-adenosyl-L-methionine</name>
        <dbReference type="ChEBI" id="CHEBI:59789"/>
    </ligand>
</feature>
<feature type="binding site" evidence="1">
    <location>
        <position position="215"/>
    </location>
    <ligand>
        <name>S-adenosyl-L-methionine</name>
        <dbReference type="ChEBI" id="CHEBI:59789"/>
    </ligand>
</feature>
<feature type="binding site" evidence="1">
    <location>
        <begin position="237"/>
        <end position="239"/>
    </location>
    <ligand>
        <name>S-adenosyl-L-methionine</name>
        <dbReference type="ChEBI" id="CHEBI:59789"/>
    </ligand>
</feature>
<feature type="binding site" evidence="1">
    <location>
        <position position="316"/>
    </location>
    <ligand>
        <name>S-adenosyl-L-methionine</name>
        <dbReference type="ChEBI" id="CHEBI:59789"/>
    </ligand>
</feature>
<feature type="disulfide bond" description="(transient)" evidence="1">
    <location>
        <begin position="122"/>
        <end position="359"/>
    </location>
</feature>
<sequence length="388" mass="43398">MSEQIVTPESSTPVVSNNEAKINLLDLNRQQMREFFKNLGEKPFRADQVMKWMYHYCCDNFDEMTDINKVLRGKLKEVAEIRAPEVVEEQRSSDGTIKWAIAVGDQRVETVYIPEDDRATLCVSSQVGCALECKFCSTAQQGFNRNLRVSEIIGQVWRAAKIVGAAKVTGQRPITNVVMMGMGEPLLNLTNVVPAMEIMLDDFGFGLSKRRVTLSTSGVVPALDKLGDMIDVALAISLHAPNDAIRDEIVPINKKYNIETFLGAVRRYLEKSNANQGRVTIEYVMLDHVNDGTEHAHQLAELLKETPCKINLIPWNPFPGAPYGRSSNSRIDRFSKVLMSYGFTTIVRKTRGDDIDAACGQLAGDVIDRTKRTLRKRMQGEAIDIKAI</sequence>
<organism>
    <name type="scientific">Salmonella arizonae (strain ATCC BAA-731 / CDC346-86 / RSK2980)</name>
    <dbReference type="NCBI Taxonomy" id="41514"/>
    <lineage>
        <taxon>Bacteria</taxon>
        <taxon>Pseudomonadati</taxon>
        <taxon>Pseudomonadota</taxon>
        <taxon>Gammaproteobacteria</taxon>
        <taxon>Enterobacterales</taxon>
        <taxon>Enterobacteriaceae</taxon>
        <taxon>Salmonella</taxon>
    </lineage>
</organism>
<gene>
    <name evidence="1" type="primary">rlmN</name>
    <name type="ordered locus">SARI_00353</name>
</gene>
<dbReference type="EC" id="2.1.1.192" evidence="1"/>
<dbReference type="EMBL" id="CP000880">
    <property type="protein sequence ID" value="ABX20291.1"/>
    <property type="molecule type" value="Genomic_DNA"/>
</dbReference>
<dbReference type="SMR" id="A9MHL3"/>
<dbReference type="STRING" id="41514.SARI_00353"/>
<dbReference type="KEGG" id="ses:SARI_00353"/>
<dbReference type="HOGENOM" id="CLU_029101_0_0_6"/>
<dbReference type="Proteomes" id="UP000002084">
    <property type="component" value="Chromosome"/>
</dbReference>
<dbReference type="GO" id="GO:0005737">
    <property type="term" value="C:cytoplasm"/>
    <property type="evidence" value="ECO:0007669"/>
    <property type="project" value="UniProtKB-SubCell"/>
</dbReference>
<dbReference type="GO" id="GO:0051539">
    <property type="term" value="F:4 iron, 4 sulfur cluster binding"/>
    <property type="evidence" value="ECO:0007669"/>
    <property type="project" value="UniProtKB-UniRule"/>
</dbReference>
<dbReference type="GO" id="GO:0046872">
    <property type="term" value="F:metal ion binding"/>
    <property type="evidence" value="ECO:0007669"/>
    <property type="project" value="UniProtKB-KW"/>
</dbReference>
<dbReference type="GO" id="GO:0070040">
    <property type="term" value="F:rRNA (adenine(2503)-C2-)-methyltransferase activity"/>
    <property type="evidence" value="ECO:0007669"/>
    <property type="project" value="UniProtKB-UniRule"/>
</dbReference>
<dbReference type="GO" id="GO:0019843">
    <property type="term" value="F:rRNA binding"/>
    <property type="evidence" value="ECO:0007669"/>
    <property type="project" value="UniProtKB-UniRule"/>
</dbReference>
<dbReference type="GO" id="GO:0002935">
    <property type="term" value="F:tRNA (adenine(37)-C2)-methyltransferase activity"/>
    <property type="evidence" value="ECO:0007669"/>
    <property type="project" value="UniProtKB-UniRule"/>
</dbReference>
<dbReference type="GO" id="GO:0000049">
    <property type="term" value="F:tRNA binding"/>
    <property type="evidence" value="ECO:0007669"/>
    <property type="project" value="UniProtKB-UniRule"/>
</dbReference>
<dbReference type="GO" id="GO:0070475">
    <property type="term" value="P:rRNA base methylation"/>
    <property type="evidence" value="ECO:0007669"/>
    <property type="project" value="UniProtKB-UniRule"/>
</dbReference>
<dbReference type="GO" id="GO:0030488">
    <property type="term" value="P:tRNA methylation"/>
    <property type="evidence" value="ECO:0007669"/>
    <property type="project" value="UniProtKB-UniRule"/>
</dbReference>
<dbReference type="CDD" id="cd01335">
    <property type="entry name" value="Radical_SAM"/>
    <property type="match status" value="1"/>
</dbReference>
<dbReference type="FunFam" id="1.10.150.530:FF:000001">
    <property type="entry name" value="Dual-specificity RNA methyltransferase RlmN"/>
    <property type="match status" value="1"/>
</dbReference>
<dbReference type="FunFam" id="3.20.20.70:FF:000008">
    <property type="entry name" value="Dual-specificity RNA methyltransferase RlmN"/>
    <property type="match status" value="1"/>
</dbReference>
<dbReference type="Gene3D" id="1.10.150.530">
    <property type="match status" value="1"/>
</dbReference>
<dbReference type="Gene3D" id="3.20.20.70">
    <property type="entry name" value="Aldolase class I"/>
    <property type="match status" value="1"/>
</dbReference>
<dbReference type="HAMAP" id="MF_01849">
    <property type="entry name" value="RNA_methyltr_RlmN"/>
    <property type="match status" value="1"/>
</dbReference>
<dbReference type="InterPro" id="IPR013785">
    <property type="entry name" value="Aldolase_TIM"/>
</dbReference>
<dbReference type="InterPro" id="IPR040072">
    <property type="entry name" value="Methyltransferase_A"/>
</dbReference>
<dbReference type="InterPro" id="IPR048641">
    <property type="entry name" value="RlmN_N"/>
</dbReference>
<dbReference type="InterPro" id="IPR027492">
    <property type="entry name" value="RNA_MTrfase_RlmN"/>
</dbReference>
<dbReference type="InterPro" id="IPR004383">
    <property type="entry name" value="rRNA_lsu_MTrfase_RlmN/Cfr"/>
</dbReference>
<dbReference type="InterPro" id="IPR007197">
    <property type="entry name" value="rSAM"/>
</dbReference>
<dbReference type="NCBIfam" id="NF008396">
    <property type="entry name" value="PRK11194.1"/>
    <property type="match status" value="1"/>
</dbReference>
<dbReference type="NCBIfam" id="TIGR00048">
    <property type="entry name" value="rRNA_mod_RlmN"/>
    <property type="match status" value="1"/>
</dbReference>
<dbReference type="PANTHER" id="PTHR30544">
    <property type="entry name" value="23S RRNA METHYLTRANSFERASE"/>
    <property type="match status" value="1"/>
</dbReference>
<dbReference type="PANTHER" id="PTHR30544:SF5">
    <property type="entry name" value="RADICAL SAM CORE DOMAIN-CONTAINING PROTEIN"/>
    <property type="match status" value="1"/>
</dbReference>
<dbReference type="Pfam" id="PF04055">
    <property type="entry name" value="Radical_SAM"/>
    <property type="match status" value="1"/>
</dbReference>
<dbReference type="Pfam" id="PF21016">
    <property type="entry name" value="RlmN_N"/>
    <property type="match status" value="1"/>
</dbReference>
<dbReference type="PIRSF" id="PIRSF006004">
    <property type="entry name" value="CHP00048"/>
    <property type="match status" value="1"/>
</dbReference>
<dbReference type="SFLD" id="SFLDF00275">
    <property type="entry name" value="adenosine_C2_methyltransferase"/>
    <property type="match status" value="1"/>
</dbReference>
<dbReference type="SFLD" id="SFLDS00029">
    <property type="entry name" value="Radical_SAM"/>
    <property type="match status" value="1"/>
</dbReference>
<dbReference type="SUPFAM" id="SSF102114">
    <property type="entry name" value="Radical SAM enzymes"/>
    <property type="match status" value="1"/>
</dbReference>
<dbReference type="PROSITE" id="PS51918">
    <property type="entry name" value="RADICAL_SAM"/>
    <property type="match status" value="1"/>
</dbReference>
<protein>
    <recommendedName>
        <fullName evidence="1">Dual-specificity RNA methyltransferase RlmN</fullName>
        <ecNumber evidence="1">2.1.1.192</ecNumber>
    </recommendedName>
    <alternativeName>
        <fullName evidence="1">23S rRNA (adenine(2503)-C(2))-methyltransferase</fullName>
    </alternativeName>
    <alternativeName>
        <fullName evidence="1">23S rRNA m2A2503 methyltransferase</fullName>
    </alternativeName>
    <alternativeName>
        <fullName evidence="1">Ribosomal RNA large subunit methyltransferase N</fullName>
    </alternativeName>
    <alternativeName>
        <fullName evidence="1">tRNA (adenine(37)-C(2))-methyltransferase</fullName>
    </alternativeName>
    <alternativeName>
        <fullName evidence="1">tRNA m2A37 methyltransferase</fullName>
    </alternativeName>
</protein>
<evidence type="ECO:0000255" key="1">
    <source>
        <dbReference type="HAMAP-Rule" id="MF_01849"/>
    </source>
</evidence>
<evidence type="ECO:0000255" key="2">
    <source>
        <dbReference type="PROSITE-ProRule" id="PRU01266"/>
    </source>
</evidence>
<reference key="1">
    <citation type="submission" date="2007-11" db="EMBL/GenBank/DDBJ databases">
        <authorList>
            <consortium name="The Salmonella enterica serovar Arizonae Genome Sequencing Project"/>
            <person name="McClelland M."/>
            <person name="Sanderson E.K."/>
            <person name="Porwollik S."/>
            <person name="Spieth J."/>
            <person name="Clifton W.S."/>
            <person name="Fulton R."/>
            <person name="Chunyan W."/>
            <person name="Wollam A."/>
            <person name="Shah N."/>
            <person name="Pepin K."/>
            <person name="Bhonagiri V."/>
            <person name="Nash W."/>
            <person name="Johnson M."/>
            <person name="Thiruvilangam P."/>
            <person name="Wilson R."/>
        </authorList>
    </citation>
    <scope>NUCLEOTIDE SEQUENCE [LARGE SCALE GENOMIC DNA]</scope>
    <source>
        <strain>ATCC BAA-731 / CDC346-86 / RSK2980</strain>
    </source>
</reference>
<proteinExistence type="inferred from homology"/>
<name>RLMN_SALAR</name>
<keyword id="KW-0004">4Fe-4S</keyword>
<keyword id="KW-0963">Cytoplasm</keyword>
<keyword id="KW-1015">Disulfide bond</keyword>
<keyword id="KW-0408">Iron</keyword>
<keyword id="KW-0411">Iron-sulfur</keyword>
<keyword id="KW-0479">Metal-binding</keyword>
<keyword id="KW-0489">Methyltransferase</keyword>
<keyword id="KW-1185">Reference proteome</keyword>
<keyword id="KW-0698">rRNA processing</keyword>
<keyword id="KW-0949">S-adenosyl-L-methionine</keyword>
<keyword id="KW-0808">Transferase</keyword>
<keyword id="KW-0819">tRNA processing</keyword>